<feature type="chain" id="PRO_0000421277" description="Long chain fatty acid elongase 6">
    <location>
        <begin position="1"/>
        <end position="274"/>
    </location>
</feature>
<feature type="topological domain" description="Extracellular" evidence="1">
    <location>
        <begin position="1"/>
        <end position="30"/>
    </location>
</feature>
<feature type="transmembrane region" description="Helical" evidence="1">
    <location>
        <begin position="31"/>
        <end position="51"/>
    </location>
</feature>
<feature type="topological domain" description="Cytoplasmic" evidence="1">
    <location>
        <begin position="52"/>
        <end position="69"/>
    </location>
</feature>
<feature type="transmembrane region" description="Helical" evidence="1">
    <location>
        <begin position="70"/>
        <end position="90"/>
    </location>
</feature>
<feature type="topological domain" description="Extracellular" evidence="1">
    <location>
        <begin position="91"/>
        <end position="111"/>
    </location>
</feature>
<feature type="transmembrane region" description="Helical" evidence="1">
    <location>
        <begin position="112"/>
        <end position="132"/>
    </location>
</feature>
<feature type="topological domain" description="Cytoplasmic" evidence="1">
    <location>
        <begin position="133"/>
        <end position="135"/>
    </location>
</feature>
<feature type="transmembrane region" description="Helical" evidence="1">
    <location>
        <begin position="136"/>
        <end position="156"/>
    </location>
</feature>
<feature type="topological domain" description="Extracellular" evidence="1">
    <location>
        <begin position="157"/>
        <end position="159"/>
    </location>
</feature>
<feature type="transmembrane region" description="Helical" evidence="1">
    <location>
        <begin position="160"/>
        <end position="180"/>
    </location>
</feature>
<feature type="topological domain" description="Cytoplasmic" evidence="1">
    <location>
        <begin position="181"/>
        <end position="202"/>
    </location>
</feature>
<feature type="transmembrane region" description="Helical" evidence="1">
    <location>
        <begin position="203"/>
        <end position="223"/>
    </location>
</feature>
<feature type="topological domain" description="Extracellular" evidence="1">
    <location>
        <begin position="224"/>
        <end position="230"/>
    </location>
</feature>
<feature type="transmembrane region" description="Helical" evidence="1">
    <location>
        <begin position="231"/>
        <end position="251"/>
    </location>
</feature>
<feature type="topological domain" description="Cytoplasmic" evidence="1">
    <location>
        <begin position="252"/>
        <end position="274"/>
    </location>
</feature>
<proteinExistence type="evidence at protein level"/>
<dbReference type="EC" id="2.3.1.-" evidence="2"/>
<dbReference type="EMBL" id="FO081367">
    <property type="protein sequence ID" value="CCD71101.1"/>
    <property type="molecule type" value="Genomic_DNA"/>
</dbReference>
<dbReference type="PIR" id="H88690">
    <property type="entry name" value="H88690"/>
</dbReference>
<dbReference type="RefSeq" id="NP_500797.1">
    <property type="nucleotide sequence ID" value="NM_068396.8"/>
</dbReference>
<dbReference type="SMR" id="Q20303"/>
<dbReference type="BioGRID" id="42444">
    <property type="interactions" value="12"/>
</dbReference>
<dbReference type="DIP" id="DIP-24907N"/>
<dbReference type="FunCoup" id="Q20303">
    <property type="interactions" value="130"/>
</dbReference>
<dbReference type="STRING" id="6239.F41H10.8.1"/>
<dbReference type="SwissLipids" id="SLP:000000029"/>
<dbReference type="SwissLipids" id="SLP:000000189"/>
<dbReference type="PaxDb" id="6239-F41H10.8"/>
<dbReference type="PeptideAtlas" id="Q20303"/>
<dbReference type="EnsemblMetazoa" id="F41H10.8.1">
    <property type="protein sequence ID" value="F41H10.8.1"/>
    <property type="gene ID" value="WBGene00001244"/>
</dbReference>
<dbReference type="GeneID" id="177321"/>
<dbReference type="KEGG" id="cel:CELE_F41H10.8"/>
<dbReference type="UCSC" id="F41H10.8.1">
    <property type="organism name" value="c. elegans"/>
</dbReference>
<dbReference type="AGR" id="WB:WBGene00001244"/>
<dbReference type="CTD" id="177321"/>
<dbReference type="WormBase" id="F41H10.8">
    <property type="protein sequence ID" value="CE10286"/>
    <property type="gene ID" value="WBGene00001244"/>
    <property type="gene designation" value="elo-6"/>
</dbReference>
<dbReference type="eggNOG" id="KOG3072">
    <property type="taxonomic scope" value="Eukaryota"/>
</dbReference>
<dbReference type="GeneTree" id="ENSGT01050000244965"/>
<dbReference type="HOGENOM" id="CLU_048483_1_0_1"/>
<dbReference type="InParanoid" id="Q20303"/>
<dbReference type="OMA" id="HVLTLNY"/>
<dbReference type="OrthoDB" id="10259681at2759"/>
<dbReference type="PhylomeDB" id="Q20303"/>
<dbReference type="Reactome" id="R-CEL-2046105">
    <property type="pathway name" value="Linoleic acid (LA) metabolism"/>
</dbReference>
<dbReference type="Reactome" id="R-CEL-2046106">
    <property type="pathway name" value="alpha-linolenic acid (ALA) metabolism"/>
</dbReference>
<dbReference type="Reactome" id="R-CEL-75876">
    <property type="pathway name" value="Synthesis of very long-chain fatty acyl-CoAs"/>
</dbReference>
<dbReference type="SignaLink" id="Q20303"/>
<dbReference type="UniPathway" id="UPA00094"/>
<dbReference type="PRO" id="PR:Q20303"/>
<dbReference type="Proteomes" id="UP000001940">
    <property type="component" value="Chromosome IV"/>
</dbReference>
<dbReference type="Bgee" id="WBGene00001244">
    <property type="expression patterns" value="Expressed in pharyngeal muscle cell (C elegans) and 4 other cell types or tissues"/>
</dbReference>
<dbReference type="GO" id="GO:0005789">
    <property type="term" value="C:endoplasmic reticulum membrane"/>
    <property type="evidence" value="ECO:0000318"/>
    <property type="project" value="GO_Central"/>
</dbReference>
<dbReference type="GO" id="GO:0009922">
    <property type="term" value="F:fatty acid elongase activity"/>
    <property type="evidence" value="ECO:0000318"/>
    <property type="project" value="GO_Central"/>
</dbReference>
<dbReference type="GO" id="GO:0034625">
    <property type="term" value="P:fatty acid elongation, monounsaturated fatty acid"/>
    <property type="evidence" value="ECO:0000318"/>
    <property type="project" value="GO_Central"/>
</dbReference>
<dbReference type="GO" id="GO:0034626">
    <property type="term" value="P:fatty acid elongation, polyunsaturated fatty acid"/>
    <property type="evidence" value="ECO:0000318"/>
    <property type="project" value="GO_Central"/>
</dbReference>
<dbReference type="GO" id="GO:0019367">
    <property type="term" value="P:fatty acid elongation, saturated fatty acid"/>
    <property type="evidence" value="ECO:0000318"/>
    <property type="project" value="GO_Central"/>
</dbReference>
<dbReference type="GO" id="GO:1902321">
    <property type="term" value="P:methyl-branched fatty acid biosynthetic process"/>
    <property type="evidence" value="ECO:0000315"/>
    <property type="project" value="UniProtKB"/>
</dbReference>
<dbReference type="GO" id="GO:0030148">
    <property type="term" value="P:sphingolipid biosynthetic process"/>
    <property type="evidence" value="ECO:0000318"/>
    <property type="project" value="GO_Central"/>
</dbReference>
<dbReference type="GO" id="GO:0042761">
    <property type="term" value="P:very long-chain fatty acid biosynthetic process"/>
    <property type="evidence" value="ECO:0000318"/>
    <property type="project" value="GO_Central"/>
</dbReference>
<dbReference type="InterPro" id="IPR030457">
    <property type="entry name" value="ELO_CS"/>
</dbReference>
<dbReference type="InterPro" id="IPR002076">
    <property type="entry name" value="ELO_fam"/>
</dbReference>
<dbReference type="PANTHER" id="PTHR11157:SF27">
    <property type="entry name" value="ELONGATION OF LONG CHAIN FATTY ACIDS PROTEIN 6"/>
    <property type="match status" value="1"/>
</dbReference>
<dbReference type="PANTHER" id="PTHR11157">
    <property type="entry name" value="FATTY ACID ACYL TRANSFERASE-RELATED"/>
    <property type="match status" value="1"/>
</dbReference>
<dbReference type="Pfam" id="PF01151">
    <property type="entry name" value="ELO"/>
    <property type="match status" value="1"/>
</dbReference>
<dbReference type="PROSITE" id="PS01188">
    <property type="entry name" value="ELO"/>
    <property type="match status" value="1"/>
</dbReference>
<comment type="function">
    <text evidence="2">Catalyzes the first and rate-limiting reaction of the four reactions that constitute the long-chain fatty acids elongation cycle. Uses malonyl-CoA to add 2 carbons per cycle to the chain of long-chain fatty acids. Condensing enzyme required for the formation of isoheptadecanoate (C17iso), which plays critical roles in animal development and growth.</text>
</comment>
<comment type="catalytic activity">
    <reaction evidence="2">
        <text>isopentadecanoyl-CoA + malonyl-CoA + H(+) = 3-oxoisoheptadecanoyl-CoA + CO2 + CoA</text>
        <dbReference type="Rhea" id="RHEA:35335"/>
        <dbReference type="ChEBI" id="CHEBI:15378"/>
        <dbReference type="ChEBI" id="CHEBI:16526"/>
        <dbReference type="ChEBI" id="CHEBI:57287"/>
        <dbReference type="ChEBI" id="CHEBI:57384"/>
        <dbReference type="ChEBI" id="CHEBI:70827"/>
        <dbReference type="ChEBI" id="CHEBI:71445"/>
    </reaction>
    <physiologicalReaction direction="left-to-right" evidence="2">
        <dbReference type="Rhea" id="RHEA:35336"/>
    </physiologicalReaction>
</comment>
<comment type="pathway">
    <text evidence="2">Lipid metabolism; fatty acid biosynthesis.</text>
</comment>
<comment type="subcellular location">
    <subcellularLocation>
        <location evidence="4">Membrane</location>
        <topology evidence="4">Multi-pass membrane protein</topology>
    </subcellularLocation>
</comment>
<comment type="tissue specificity">
    <text evidence="2">Expressed in the gut, neurons, pharynx and muscles of the vulva.</text>
</comment>
<comment type="similarity">
    <text evidence="4">Belongs to the ELO family.</text>
</comment>
<sequence>MPQGEVSFFEVLTTAPFSHELSKKHIAQTQYAAFWISMAYVVVIFGLKAVMTNRKPFDLTGPLNLWNAGLAIFSTLGSLATTFGLLHEFFSRGFFESYIHIGDFYNGLSGMFTWLFVLSKVAEFGDTLFIILRKKPLMFLHWYHHVLTMNYAFMSFEANLGFNTWITWMNFSVHSIMYGYYMLRSFGVKVPAWIAKNITTMQILQFVITHFILFHVGYLAVTGQSVDSTPGYYWFCLLMEISYVVLFGNFYYQSYIKGGGKKFNAEKKTEKKIE</sequence>
<protein>
    <recommendedName>
        <fullName evidence="4">Long chain fatty acid elongase 6</fullName>
        <shortName evidence="3">ELO-6</shortName>
        <ecNumber evidence="2">2.3.1.-</ecNumber>
    </recommendedName>
    <alternativeName>
        <fullName>3-keto acyl-CoA synthase elo-6</fullName>
    </alternativeName>
    <alternativeName>
        <fullName>Elongation of long chain fatty acids protein 6</fullName>
    </alternativeName>
    <alternativeName>
        <fullName>Long-chain 3-oxoacyl-CoA synthase 6</fullName>
        <shortName>CEELO6</shortName>
    </alternativeName>
    <alternativeName>
        <fullName>Monomethyl branched-chain fatty acid elongase 6</fullName>
        <shortName>mmBCFA elongase 6</shortName>
    </alternativeName>
</protein>
<gene>
    <name type="primary">elo-6</name>
    <name type="ORF">F41H10.8</name>
</gene>
<reference key="1">
    <citation type="journal article" date="1998" name="Science">
        <title>Genome sequence of the nematode C. elegans: a platform for investigating biology.</title>
        <authorList>
            <consortium name="The C. elegans sequencing consortium"/>
        </authorList>
    </citation>
    <scope>NUCLEOTIDE SEQUENCE [LARGE SCALE GENOMIC DNA]</scope>
    <source>
        <strain>Bristol N2</strain>
    </source>
</reference>
<reference key="2">
    <citation type="journal article" date="2004" name="PLoS Biol.">
        <title>Monomethyl branched-chain fatty acids play an essential role in Caenorhabditis elegans development.</title>
        <authorList>
            <person name="Kniazeva M."/>
            <person name="Crawford Q.T."/>
            <person name="Seiber M."/>
            <person name="Wang C.Y."/>
            <person name="Han M."/>
        </authorList>
    </citation>
    <scope>FUNCTION</scope>
    <scope>CATALYTIC ACTIVITY</scope>
    <scope>PATHWAY</scope>
    <scope>TISSUE SPECIFICITY</scope>
</reference>
<accession>Q20303</accession>
<keyword id="KW-0275">Fatty acid biosynthesis</keyword>
<keyword id="KW-0276">Fatty acid metabolism</keyword>
<keyword id="KW-0444">Lipid biosynthesis</keyword>
<keyword id="KW-0443">Lipid metabolism</keyword>
<keyword id="KW-0472">Membrane</keyword>
<keyword id="KW-1185">Reference proteome</keyword>
<keyword id="KW-0808">Transferase</keyword>
<keyword id="KW-0812">Transmembrane</keyword>
<keyword id="KW-1133">Transmembrane helix</keyword>
<name>ELO6_CAEEL</name>
<evidence type="ECO:0000255" key="1"/>
<evidence type="ECO:0000269" key="2">
    <source>
    </source>
</evidence>
<evidence type="ECO:0000303" key="3">
    <source>
    </source>
</evidence>
<evidence type="ECO:0000305" key="4"/>
<organism>
    <name type="scientific">Caenorhabditis elegans</name>
    <dbReference type="NCBI Taxonomy" id="6239"/>
    <lineage>
        <taxon>Eukaryota</taxon>
        <taxon>Metazoa</taxon>
        <taxon>Ecdysozoa</taxon>
        <taxon>Nematoda</taxon>
        <taxon>Chromadorea</taxon>
        <taxon>Rhabditida</taxon>
        <taxon>Rhabditina</taxon>
        <taxon>Rhabditomorpha</taxon>
        <taxon>Rhabditoidea</taxon>
        <taxon>Rhabditidae</taxon>
        <taxon>Peloderinae</taxon>
        <taxon>Caenorhabditis</taxon>
    </lineage>
</organism>